<keyword id="KW-0010">Activator</keyword>
<keyword id="KW-0238">DNA-binding</keyword>
<keyword id="KW-0804">Transcription</keyword>
<keyword id="KW-0805">Transcription regulation</keyword>
<evidence type="ECO:0000255" key="1">
    <source>
        <dbReference type="HAMAP-Rule" id="MF_00166"/>
    </source>
</evidence>
<feature type="chain" id="PRO_1000023343" description="DNA-binding protein Fis">
    <location>
        <begin position="1"/>
        <end position="101"/>
    </location>
</feature>
<feature type="DNA-binding region" description="H-T-H motif" evidence="1">
    <location>
        <begin position="77"/>
        <end position="96"/>
    </location>
</feature>
<proteinExistence type="inferred from homology"/>
<sequence>MFDQTTNTEVHQLTVGKIETANGTIKPQLLRDAVKRAVTNFFAQLDGQEAQEVYEMVLSEVEAPLLDIIMQHTRGNQTRAANMLGINRGTLRKKLKKYGMN</sequence>
<accession>Q0HQJ9</accession>
<reference key="1">
    <citation type="submission" date="2006-08" db="EMBL/GenBank/DDBJ databases">
        <title>Complete sequence of chromosome 1 of Shewanella sp. MR-7.</title>
        <authorList>
            <person name="Copeland A."/>
            <person name="Lucas S."/>
            <person name="Lapidus A."/>
            <person name="Barry K."/>
            <person name="Detter J.C."/>
            <person name="Glavina del Rio T."/>
            <person name="Hammon N."/>
            <person name="Israni S."/>
            <person name="Dalin E."/>
            <person name="Tice H."/>
            <person name="Pitluck S."/>
            <person name="Kiss H."/>
            <person name="Brettin T."/>
            <person name="Bruce D."/>
            <person name="Han C."/>
            <person name="Tapia R."/>
            <person name="Gilna P."/>
            <person name="Schmutz J."/>
            <person name="Larimer F."/>
            <person name="Land M."/>
            <person name="Hauser L."/>
            <person name="Kyrpides N."/>
            <person name="Mikhailova N."/>
            <person name="Nealson K."/>
            <person name="Konstantinidis K."/>
            <person name="Klappenbach J."/>
            <person name="Tiedje J."/>
            <person name="Richardson P."/>
        </authorList>
    </citation>
    <scope>NUCLEOTIDE SEQUENCE [LARGE SCALE GENOMIC DNA]</scope>
    <source>
        <strain>MR-7</strain>
    </source>
</reference>
<dbReference type="EMBL" id="CP000444">
    <property type="protein sequence ID" value="ABI44606.1"/>
    <property type="molecule type" value="Genomic_DNA"/>
</dbReference>
<dbReference type="SMR" id="Q0HQJ9"/>
<dbReference type="KEGG" id="shm:Shewmr7_3626"/>
<dbReference type="HOGENOM" id="CLU_158040_3_3_6"/>
<dbReference type="GO" id="GO:0003700">
    <property type="term" value="F:DNA-binding transcription factor activity"/>
    <property type="evidence" value="ECO:0007669"/>
    <property type="project" value="UniProtKB-UniRule"/>
</dbReference>
<dbReference type="GO" id="GO:0043565">
    <property type="term" value="F:sequence-specific DNA binding"/>
    <property type="evidence" value="ECO:0007669"/>
    <property type="project" value="InterPro"/>
</dbReference>
<dbReference type="FunFam" id="1.10.10.60:FF:000006">
    <property type="entry name" value="DNA-binding protein Fis"/>
    <property type="match status" value="1"/>
</dbReference>
<dbReference type="Gene3D" id="1.10.10.60">
    <property type="entry name" value="Homeodomain-like"/>
    <property type="match status" value="1"/>
</dbReference>
<dbReference type="HAMAP" id="MF_00166">
    <property type="entry name" value="DNA_binding_Fis"/>
    <property type="match status" value="1"/>
</dbReference>
<dbReference type="InterPro" id="IPR005412">
    <property type="entry name" value="Fis_DNA-bd"/>
</dbReference>
<dbReference type="InterPro" id="IPR009057">
    <property type="entry name" value="Homeodomain-like_sf"/>
</dbReference>
<dbReference type="InterPro" id="IPR002197">
    <property type="entry name" value="HTH_Fis"/>
</dbReference>
<dbReference type="InterPro" id="IPR050207">
    <property type="entry name" value="Trans_regulatory_Fis"/>
</dbReference>
<dbReference type="NCBIfam" id="NF001659">
    <property type="entry name" value="PRK00430.1"/>
    <property type="match status" value="1"/>
</dbReference>
<dbReference type="PANTHER" id="PTHR47918">
    <property type="entry name" value="DNA-BINDING PROTEIN FIS"/>
    <property type="match status" value="1"/>
</dbReference>
<dbReference type="PANTHER" id="PTHR47918:SF1">
    <property type="entry name" value="DNA-BINDING PROTEIN FIS"/>
    <property type="match status" value="1"/>
</dbReference>
<dbReference type="Pfam" id="PF02954">
    <property type="entry name" value="HTH_8"/>
    <property type="match status" value="1"/>
</dbReference>
<dbReference type="PIRSF" id="PIRSF002097">
    <property type="entry name" value="DNA-binding_Fis"/>
    <property type="match status" value="1"/>
</dbReference>
<dbReference type="PRINTS" id="PR01591">
    <property type="entry name" value="DNABINDNGFIS"/>
</dbReference>
<dbReference type="PRINTS" id="PR01590">
    <property type="entry name" value="HTHFIS"/>
</dbReference>
<dbReference type="SUPFAM" id="SSF46689">
    <property type="entry name" value="Homeodomain-like"/>
    <property type="match status" value="1"/>
</dbReference>
<comment type="function">
    <text evidence="1">Activates ribosomal RNA transcription. Plays a direct role in upstream activation of rRNA promoters.</text>
</comment>
<comment type="subunit">
    <text evidence="1">Homodimer.</text>
</comment>
<comment type="similarity">
    <text evidence="1">Belongs to the transcriptional regulatory Fis family.</text>
</comment>
<protein>
    <recommendedName>
        <fullName evidence="1">DNA-binding protein Fis</fullName>
    </recommendedName>
</protein>
<organism>
    <name type="scientific">Shewanella sp. (strain MR-7)</name>
    <dbReference type="NCBI Taxonomy" id="60481"/>
    <lineage>
        <taxon>Bacteria</taxon>
        <taxon>Pseudomonadati</taxon>
        <taxon>Pseudomonadota</taxon>
        <taxon>Gammaproteobacteria</taxon>
        <taxon>Alteromonadales</taxon>
        <taxon>Shewanellaceae</taxon>
        <taxon>Shewanella</taxon>
    </lineage>
</organism>
<name>FIS_SHESR</name>
<gene>
    <name evidence="1" type="primary">fis</name>
    <name type="ordered locus">Shewmr7_3626</name>
</gene>